<gene>
    <name evidence="4" type="primary">aptA</name>
    <name evidence="5" type="ordered locus">BVU_0359</name>
</gene>
<keyword id="KW-0119">Carbohydrate metabolism</keyword>
<keyword id="KW-0786">Thiamine pyrophosphate</keyword>
<keyword id="KW-0808">Transferase</keyword>
<evidence type="ECO:0000250" key="1">
    <source>
        <dbReference type="UniProtKB" id="P29401"/>
    </source>
</evidence>
<evidence type="ECO:0000269" key="2">
    <source>
    </source>
</evidence>
<evidence type="ECO:0000305" key="3"/>
<evidence type="ECO:0000305" key="4">
    <source>
    </source>
</evidence>
<evidence type="ECO:0000312" key="5">
    <source>
        <dbReference type="EMBL" id="ABR38078.1"/>
    </source>
</evidence>
<accession>A6KXB4</accession>
<dbReference type="EC" id="2.2.1.13" evidence="2"/>
<dbReference type="EMBL" id="CP000139">
    <property type="protein sequence ID" value="ABR38078.1"/>
    <property type="molecule type" value="Genomic_DNA"/>
</dbReference>
<dbReference type="RefSeq" id="WP_011964721.1">
    <property type="nucleotide sequence ID" value="NZ_JANSWM010000030.1"/>
</dbReference>
<dbReference type="SMR" id="A6KXB4"/>
<dbReference type="STRING" id="435590.BVU_0359"/>
<dbReference type="PaxDb" id="435590-BVU_0359"/>
<dbReference type="GeneID" id="5301328"/>
<dbReference type="KEGG" id="bvu:BVU_0359"/>
<dbReference type="PATRIC" id="fig|435590.9.peg.371"/>
<dbReference type="eggNOG" id="COG3959">
    <property type="taxonomic scope" value="Bacteria"/>
</dbReference>
<dbReference type="HOGENOM" id="CLU_009227_4_1_10"/>
<dbReference type="BioCyc" id="BVUL435590:G1G59-378-MONOMER"/>
<dbReference type="BRENDA" id="2.2.1.13">
    <property type="organism ID" value="776"/>
</dbReference>
<dbReference type="Proteomes" id="UP000002861">
    <property type="component" value="Chromosome"/>
</dbReference>
<dbReference type="GO" id="GO:0016740">
    <property type="term" value="F:transferase activity"/>
    <property type="evidence" value="ECO:0007669"/>
    <property type="project" value="UniProtKB-KW"/>
</dbReference>
<dbReference type="CDD" id="cd02012">
    <property type="entry name" value="TPP_TK"/>
    <property type="match status" value="1"/>
</dbReference>
<dbReference type="Gene3D" id="3.40.50.970">
    <property type="match status" value="1"/>
</dbReference>
<dbReference type="InterPro" id="IPR029061">
    <property type="entry name" value="THDP-binding"/>
</dbReference>
<dbReference type="InterPro" id="IPR005474">
    <property type="entry name" value="Transketolase_N"/>
</dbReference>
<dbReference type="PANTHER" id="PTHR47514">
    <property type="entry name" value="TRANSKETOLASE N-TERMINAL SECTION-RELATED"/>
    <property type="match status" value="1"/>
</dbReference>
<dbReference type="PANTHER" id="PTHR47514:SF1">
    <property type="entry name" value="TRANSKETOLASE N-TERMINAL SECTION-RELATED"/>
    <property type="match status" value="1"/>
</dbReference>
<dbReference type="Pfam" id="PF00456">
    <property type="entry name" value="Transketolase_N"/>
    <property type="match status" value="1"/>
</dbReference>
<dbReference type="SUPFAM" id="SSF52518">
    <property type="entry name" value="Thiamin diphosphate-binding fold (THDP-binding)"/>
    <property type="match status" value="1"/>
</dbReference>
<comment type="function">
    <text evidence="2">Involved in catabolism of D-apiose. Catalyzes the transfer of the glycolaldehyde group from apulose-4-phosphate to D-glyceraldehyde 3-phosphate, generating dihydroxyacetone phosphate and D-xylulose-5-phosphate.</text>
</comment>
<comment type="catalytic activity">
    <reaction evidence="2">
        <text>apulose 4-phosphate + D-glyceraldehyde 3-phosphate = D-xylulose 5-phosphate + dihydroxyacetone phosphate</text>
        <dbReference type="Rhea" id="RHEA:57024"/>
        <dbReference type="ChEBI" id="CHEBI:57642"/>
        <dbReference type="ChEBI" id="CHEBI:57737"/>
        <dbReference type="ChEBI" id="CHEBI:59776"/>
        <dbReference type="ChEBI" id="CHEBI:141351"/>
        <dbReference type="EC" id="2.2.1.13"/>
    </reaction>
</comment>
<comment type="cofactor">
    <cofactor evidence="1">
        <name>thiamine diphosphate</name>
        <dbReference type="ChEBI" id="CHEBI:58937"/>
    </cofactor>
</comment>
<comment type="pathway">
    <text evidence="2">Carbohydrate metabolism.</text>
</comment>
<comment type="subunit">
    <text evidence="4">Probable heterodimer composed of AptA and AptB.</text>
</comment>
<comment type="similarity">
    <text evidence="3">Belongs to the transketolase family.</text>
</comment>
<reference key="1">
    <citation type="journal article" date="2007" name="PLoS Biol.">
        <title>Evolution of symbiotic bacteria in the distal human intestine.</title>
        <authorList>
            <person name="Xu J."/>
            <person name="Mahowald M.A."/>
            <person name="Ley R.E."/>
            <person name="Lozupone C.A."/>
            <person name="Hamady M."/>
            <person name="Martens E.C."/>
            <person name="Henrissat B."/>
            <person name="Coutinho P.M."/>
            <person name="Minx P."/>
            <person name="Latreille P."/>
            <person name="Cordum H."/>
            <person name="Van Brunt A."/>
            <person name="Kim K."/>
            <person name="Fulton R.S."/>
            <person name="Fulton L.A."/>
            <person name="Clifton S.W."/>
            <person name="Wilson R.K."/>
            <person name="Knight R.D."/>
            <person name="Gordon J.I."/>
        </authorList>
    </citation>
    <scope>NUCLEOTIDE SEQUENCE [LARGE SCALE GENOMIC DNA]</scope>
    <source>
        <strain>ATCC 8482 / DSM 1447 / JCM 5826 / CCUG 4940 / NBRC 14291 / NCTC 11154</strain>
    </source>
</reference>
<reference key="2">
    <citation type="journal article" date="2018" name="Nat. Chem. Biol.">
        <title>Functional assignment of multiple catabolic pathways for D-apiose.</title>
        <authorList>
            <person name="Carter M.S."/>
            <person name="Zhang X."/>
            <person name="Huang H."/>
            <person name="Bouvier J.T."/>
            <person name="Francisco B.S."/>
            <person name="Vetting M.W."/>
            <person name="Al-Obaidi N."/>
            <person name="Bonanno J.B."/>
            <person name="Ghosh A."/>
            <person name="Zallot R.G."/>
            <person name="Andersen H.M."/>
            <person name="Almo S.C."/>
            <person name="Gerlt J.A."/>
        </authorList>
    </citation>
    <scope>FUNCTION</scope>
    <scope>CATALYTIC ACTIVITY</scope>
    <scope>PATHWAY</scope>
    <scope>SUBUNIT</scope>
</reference>
<organism>
    <name type="scientific">Phocaeicola vulgatus (strain ATCC 8482 / DSM 1447 / JCM 5826 / CCUG 4940 / NBRC 14291 / NCTC 11154)</name>
    <name type="common">Bacteroides vulgatus</name>
    <dbReference type="NCBI Taxonomy" id="435590"/>
    <lineage>
        <taxon>Bacteria</taxon>
        <taxon>Pseudomonadati</taxon>
        <taxon>Bacteroidota</taxon>
        <taxon>Bacteroidia</taxon>
        <taxon>Bacteroidales</taxon>
        <taxon>Bacteroidaceae</taxon>
        <taxon>Phocaeicola</taxon>
    </lineage>
</organism>
<feature type="chain" id="PRO_0000446026" description="Apulose-4-phosphate transketolase subunit A">
    <location>
        <begin position="1"/>
        <end position="281"/>
    </location>
</feature>
<name>APTA_PHOV8</name>
<sequence>MQVETLELQSEKNRKRLVEIVYKAKAGHIGGDLSCLNVLTALYFDIMRVWPDKPKETKRDRFVMSKGHCVEALYVTLEAKGFISREVTDTLGEFGSILSGHPTIEVPGIEVNTGALGHGLSVGVGMAMAAKMDKADYKTYVLMGDGEQGEGSIYEAAMAGNQYKLDNLVAIIDRNRLQISGTTEEVMSLESMRDRWTAFGWDVLEMNGDEMEDIIRTFRSIDYTNKKPHLLISHTTKGKGVSYMEGIAKWHHGVPTAEQYEEAVREVSERIEKLEKENNGK</sequence>
<protein>
    <recommendedName>
        <fullName evidence="3">Apulose-4-phosphate transketolase subunit A</fullName>
        <ecNumber evidence="2">2.2.1.13</ecNumber>
    </recommendedName>
    <alternativeName>
        <fullName evidence="3">Apulose-4-phosphate transketolase N-terminal subunit</fullName>
    </alternativeName>
</protein>
<proteinExistence type="evidence at protein level"/>